<proteinExistence type="inferred from homology"/>
<comment type="similarity">
    <text evidence="1">Belongs to the bacterial ribosomal protein bL32 family.</text>
</comment>
<name>RL32_ANADE</name>
<protein>
    <recommendedName>
        <fullName evidence="1">Large ribosomal subunit protein bL32</fullName>
    </recommendedName>
    <alternativeName>
        <fullName evidence="2">50S ribosomal protein L32</fullName>
    </alternativeName>
</protein>
<evidence type="ECO:0000255" key="1">
    <source>
        <dbReference type="HAMAP-Rule" id="MF_00340"/>
    </source>
</evidence>
<evidence type="ECO:0000305" key="2"/>
<reference key="1">
    <citation type="submission" date="2006-01" db="EMBL/GenBank/DDBJ databases">
        <title>Complete sequence of Anaeromyxobacter dehalogenans 2CP-C.</title>
        <authorList>
            <person name="Copeland A."/>
            <person name="Lucas S."/>
            <person name="Lapidus A."/>
            <person name="Barry K."/>
            <person name="Detter J.C."/>
            <person name="Glavina T."/>
            <person name="Hammon N."/>
            <person name="Israni S."/>
            <person name="Pitluck S."/>
            <person name="Brettin T."/>
            <person name="Bruce D."/>
            <person name="Han C."/>
            <person name="Tapia R."/>
            <person name="Gilna P."/>
            <person name="Kiss H."/>
            <person name="Schmutz J."/>
            <person name="Larimer F."/>
            <person name="Land M."/>
            <person name="Kyrpides N."/>
            <person name="Anderson I."/>
            <person name="Sanford R.A."/>
            <person name="Ritalahti K.M."/>
            <person name="Thomas H.S."/>
            <person name="Kirby J.R."/>
            <person name="Zhulin I.B."/>
            <person name="Loeffler F.E."/>
            <person name="Richardson P."/>
        </authorList>
    </citation>
    <scope>NUCLEOTIDE SEQUENCE [LARGE SCALE GENOMIC DNA]</scope>
    <source>
        <strain>2CP-C</strain>
    </source>
</reference>
<dbReference type="EMBL" id="CP000251">
    <property type="protein sequence ID" value="ABC82522.1"/>
    <property type="molecule type" value="Genomic_DNA"/>
</dbReference>
<dbReference type="RefSeq" id="WP_011421804.1">
    <property type="nucleotide sequence ID" value="NC_007760.1"/>
</dbReference>
<dbReference type="SMR" id="Q2ILJ1"/>
<dbReference type="STRING" id="290397.Adeh_2752"/>
<dbReference type="KEGG" id="ade:Adeh_2752"/>
<dbReference type="eggNOG" id="COG0333">
    <property type="taxonomic scope" value="Bacteria"/>
</dbReference>
<dbReference type="HOGENOM" id="CLU_129084_1_3_7"/>
<dbReference type="Proteomes" id="UP000001935">
    <property type="component" value="Chromosome"/>
</dbReference>
<dbReference type="GO" id="GO:0015934">
    <property type="term" value="C:large ribosomal subunit"/>
    <property type="evidence" value="ECO:0007669"/>
    <property type="project" value="InterPro"/>
</dbReference>
<dbReference type="GO" id="GO:0003735">
    <property type="term" value="F:structural constituent of ribosome"/>
    <property type="evidence" value="ECO:0007669"/>
    <property type="project" value="InterPro"/>
</dbReference>
<dbReference type="GO" id="GO:0006412">
    <property type="term" value="P:translation"/>
    <property type="evidence" value="ECO:0007669"/>
    <property type="project" value="UniProtKB-UniRule"/>
</dbReference>
<dbReference type="HAMAP" id="MF_00340">
    <property type="entry name" value="Ribosomal_bL32"/>
    <property type="match status" value="1"/>
</dbReference>
<dbReference type="InterPro" id="IPR002677">
    <property type="entry name" value="Ribosomal_bL32"/>
</dbReference>
<dbReference type="InterPro" id="IPR044957">
    <property type="entry name" value="Ribosomal_bL32_bact"/>
</dbReference>
<dbReference type="InterPro" id="IPR011332">
    <property type="entry name" value="Ribosomal_zn-bd"/>
</dbReference>
<dbReference type="NCBIfam" id="TIGR01031">
    <property type="entry name" value="rpmF_bact"/>
    <property type="match status" value="1"/>
</dbReference>
<dbReference type="PANTHER" id="PTHR35534">
    <property type="entry name" value="50S RIBOSOMAL PROTEIN L32"/>
    <property type="match status" value="1"/>
</dbReference>
<dbReference type="PANTHER" id="PTHR35534:SF1">
    <property type="entry name" value="LARGE RIBOSOMAL SUBUNIT PROTEIN BL32"/>
    <property type="match status" value="1"/>
</dbReference>
<dbReference type="Pfam" id="PF01783">
    <property type="entry name" value="Ribosomal_L32p"/>
    <property type="match status" value="1"/>
</dbReference>
<dbReference type="SUPFAM" id="SSF57829">
    <property type="entry name" value="Zn-binding ribosomal proteins"/>
    <property type="match status" value="1"/>
</dbReference>
<gene>
    <name evidence="1" type="primary">rpmF</name>
    <name type="ordered locus">Adeh_2752</name>
</gene>
<accession>Q2ILJ1</accession>
<organism>
    <name type="scientific">Anaeromyxobacter dehalogenans (strain 2CP-C)</name>
    <dbReference type="NCBI Taxonomy" id="290397"/>
    <lineage>
        <taxon>Bacteria</taxon>
        <taxon>Pseudomonadati</taxon>
        <taxon>Myxococcota</taxon>
        <taxon>Myxococcia</taxon>
        <taxon>Myxococcales</taxon>
        <taxon>Cystobacterineae</taxon>
        <taxon>Anaeromyxobacteraceae</taxon>
        <taxon>Anaeromyxobacter</taxon>
    </lineage>
</organism>
<sequence length="59" mass="6643">MGVPKKRTSSMRRDRRRAANFKLKPVNVVKCPKCKEPVLPHRACPSCGTYKGEQITEAS</sequence>
<keyword id="KW-1185">Reference proteome</keyword>
<keyword id="KW-0687">Ribonucleoprotein</keyword>
<keyword id="KW-0689">Ribosomal protein</keyword>
<feature type="chain" id="PRO_0000296419" description="Large ribosomal subunit protein bL32">
    <location>
        <begin position="1"/>
        <end position="59"/>
    </location>
</feature>